<name>RS17_GEOSW</name>
<keyword id="KW-0687">Ribonucleoprotein</keyword>
<keyword id="KW-0689">Ribosomal protein</keyword>
<keyword id="KW-0694">RNA-binding</keyword>
<keyword id="KW-0699">rRNA-binding</keyword>
<accession>C5D3S6</accession>
<sequence>MSERNQRKVYVGRVVSDKMDKTITVLVETYKKHPLYGKRVKYSKKYKAHDENNIAKVGDIVKIMETRPLSATKRFRLVEIVEKAVIV</sequence>
<feature type="chain" id="PRO_1000214786" description="Small ribosomal subunit protein uS17">
    <location>
        <begin position="1"/>
        <end position="87"/>
    </location>
</feature>
<gene>
    <name evidence="1" type="primary">rpsQ</name>
    <name type="ordered locus">GWCH70_0120</name>
</gene>
<reference key="1">
    <citation type="submission" date="2009-06" db="EMBL/GenBank/DDBJ databases">
        <title>Complete sequence of chromosome of Geopacillus sp. WCH70.</title>
        <authorList>
            <consortium name="US DOE Joint Genome Institute"/>
            <person name="Lucas S."/>
            <person name="Copeland A."/>
            <person name="Lapidus A."/>
            <person name="Glavina del Rio T."/>
            <person name="Dalin E."/>
            <person name="Tice H."/>
            <person name="Bruce D."/>
            <person name="Goodwin L."/>
            <person name="Pitluck S."/>
            <person name="Chertkov O."/>
            <person name="Brettin T."/>
            <person name="Detter J.C."/>
            <person name="Han C."/>
            <person name="Larimer F."/>
            <person name="Land M."/>
            <person name="Hauser L."/>
            <person name="Kyrpides N."/>
            <person name="Mikhailova N."/>
            <person name="Brumm P."/>
            <person name="Mead D.A."/>
            <person name="Richardson P."/>
        </authorList>
    </citation>
    <scope>NUCLEOTIDE SEQUENCE [LARGE SCALE GENOMIC DNA]</scope>
    <source>
        <strain>WCH70</strain>
    </source>
</reference>
<organism>
    <name type="scientific">Geobacillus sp. (strain WCH70)</name>
    <dbReference type="NCBI Taxonomy" id="471223"/>
    <lineage>
        <taxon>Bacteria</taxon>
        <taxon>Bacillati</taxon>
        <taxon>Bacillota</taxon>
        <taxon>Bacilli</taxon>
        <taxon>Bacillales</taxon>
        <taxon>Anoxybacillaceae</taxon>
        <taxon>Geobacillus</taxon>
    </lineage>
</organism>
<dbReference type="EMBL" id="CP001638">
    <property type="protein sequence ID" value="ACS23060.1"/>
    <property type="molecule type" value="Genomic_DNA"/>
</dbReference>
<dbReference type="SMR" id="C5D3S6"/>
<dbReference type="STRING" id="471223.GWCH70_0120"/>
<dbReference type="KEGG" id="gwc:GWCH70_0120"/>
<dbReference type="eggNOG" id="COG0186">
    <property type="taxonomic scope" value="Bacteria"/>
</dbReference>
<dbReference type="HOGENOM" id="CLU_073626_1_0_9"/>
<dbReference type="OrthoDB" id="9811714at2"/>
<dbReference type="GO" id="GO:0022627">
    <property type="term" value="C:cytosolic small ribosomal subunit"/>
    <property type="evidence" value="ECO:0007669"/>
    <property type="project" value="TreeGrafter"/>
</dbReference>
<dbReference type="GO" id="GO:0019843">
    <property type="term" value="F:rRNA binding"/>
    <property type="evidence" value="ECO:0007669"/>
    <property type="project" value="UniProtKB-UniRule"/>
</dbReference>
<dbReference type="GO" id="GO:0003735">
    <property type="term" value="F:structural constituent of ribosome"/>
    <property type="evidence" value="ECO:0007669"/>
    <property type="project" value="InterPro"/>
</dbReference>
<dbReference type="GO" id="GO:0006412">
    <property type="term" value="P:translation"/>
    <property type="evidence" value="ECO:0007669"/>
    <property type="project" value="UniProtKB-UniRule"/>
</dbReference>
<dbReference type="CDD" id="cd00364">
    <property type="entry name" value="Ribosomal_uS17"/>
    <property type="match status" value="1"/>
</dbReference>
<dbReference type="FunFam" id="2.40.50.140:FF:000026">
    <property type="entry name" value="30S ribosomal protein S17"/>
    <property type="match status" value="1"/>
</dbReference>
<dbReference type="Gene3D" id="2.40.50.140">
    <property type="entry name" value="Nucleic acid-binding proteins"/>
    <property type="match status" value="1"/>
</dbReference>
<dbReference type="HAMAP" id="MF_01345_B">
    <property type="entry name" value="Ribosomal_uS17_B"/>
    <property type="match status" value="1"/>
</dbReference>
<dbReference type="InterPro" id="IPR012340">
    <property type="entry name" value="NA-bd_OB-fold"/>
</dbReference>
<dbReference type="InterPro" id="IPR000266">
    <property type="entry name" value="Ribosomal_uS17"/>
</dbReference>
<dbReference type="InterPro" id="IPR019984">
    <property type="entry name" value="Ribosomal_uS17_bact/chlr"/>
</dbReference>
<dbReference type="InterPro" id="IPR019979">
    <property type="entry name" value="Ribosomal_uS17_CS"/>
</dbReference>
<dbReference type="NCBIfam" id="NF004123">
    <property type="entry name" value="PRK05610.1"/>
    <property type="match status" value="1"/>
</dbReference>
<dbReference type="NCBIfam" id="TIGR03635">
    <property type="entry name" value="uS17_bact"/>
    <property type="match status" value="1"/>
</dbReference>
<dbReference type="PANTHER" id="PTHR10744">
    <property type="entry name" value="40S RIBOSOMAL PROTEIN S11 FAMILY MEMBER"/>
    <property type="match status" value="1"/>
</dbReference>
<dbReference type="PANTHER" id="PTHR10744:SF1">
    <property type="entry name" value="SMALL RIBOSOMAL SUBUNIT PROTEIN US17M"/>
    <property type="match status" value="1"/>
</dbReference>
<dbReference type="Pfam" id="PF00366">
    <property type="entry name" value="Ribosomal_S17"/>
    <property type="match status" value="1"/>
</dbReference>
<dbReference type="PRINTS" id="PR00973">
    <property type="entry name" value="RIBOSOMALS17"/>
</dbReference>
<dbReference type="SUPFAM" id="SSF50249">
    <property type="entry name" value="Nucleic acid-binding proteins"/>
    <property type="match status" value="1"/>
</dbReference>
<dbReference type="PROSITE" id="PS00056">
    <property type="entry name" value="RIBOSOMAL_S17"/>
    <property type="match status" value="1"/>
</dbReference>
<protein>
    <recommendedName>
        <fullName evidence="1">Small ribosomal subunit protein uS17</fullName>
    </recommendedName>
    <alternativeName>
        <fullName evidence="2">30S ribosomal protein S17</fullName>
    </alternativeName>
</protein>
<comment type="function">
    <text evidence="1">One of the primary rRNA binding proteins, it binds specifically to the 5'-end of 16S ribosomal RNA.</text>
</comment>
<comment type="subunit">
    <text evidence="1">Part of the 30S ribosomal subunit.</text>
</comment>
<comment type="similarity">
    <text evidence="1">Belongs to the universal ribosomal protein uS17 family.</text>
</comment>
<evidence type="ECO:0000255" key="1">
    <source>
        <dbReference type="HAMAP-Rule" id="MF_01345"/>
    </source>
</evidence>
<evidence type="ECO:0000305" key="2"/>
<proteinExistence type="inferred from homology"/>